<feature type="chain" id="PRO_0000252319" description="Translationally-controlled tumor protein homolog">
    <location>
        <begin position="1"/>
        <end position="167"/>
    </location>
</feature>
<feature type="domain" description="TCTP" evidence="2">
    <location>
        <begin position="1"/>
        <end position="167"/>
    </location>
</feature>
<sequence>MLIFEDVISGDELLSDAYDVKLVDGAVYEADCAMVTVGNGDIDIGANPSAEDGEEALEDGAETVNNVVYSFRLQPTMFDKKSFTTYIKGYMKRIKAYLAENDPDSVEAFEKGATAYVKKVLGSFKDWEFYTGESMDPDAMVVLLNYREDGTTPYVAIWKHGVKENKI</sequence>
<protein>
    <recommendedName>
        <fullName>Translationally-controlled tumor protein homolog</fullName>
        <shortName>TCTP</shortName>
    </recommendedName>
</protein>
<name>TCTP_CANAL</name>
<keyword id="KW-0963">Cytoplasm</keyword>
<keyword id="KW-0206">Cytoskeleton</keyword>
<keyword id="KW-0493">Microtubule</keyword>
<keyword id="KW-0648">Protein biosynthesis</keyword>
<keyword id="KW-1185">Reference proteome</keyword>
<dbReference type="EMBL" id="CP017630">
    <property type="protein sequence ID" value="AOW30851.1"/>
    <property type="molecule type" value="Genomic_DNA"/>
</dbReference>
<dbReference type="RefSeq" id="XP_717958.1">
    <property type="nucleotide sequence ID" value="XM_712865.1"/>
</dbReference>
<dbReference type="SMR" id="Q5A860"/>
<dbReference type="BioGRID" id="1223493">
    <property type="interactions" value="2"/>
</dbReference>
<dbReference type="FunCoup" id="Q5A860">
    <property type="interactions" value="910"/>
</dbReference>
<dbReference type="STRING" id="237561.Q5A860"/>
<dbReference type="EnsemblFungi" id="CR_00860C_A-T">
    <property type="protein sequence ID" value="CR_00860C_A-T-p1"/>
    <property type="gene ID" value="CR_00860C_A"/>
</dbReference>
<dbReference type="GeneID" id="3640399"/>
<dbReference type="KEGG" id="cal:CAALFM_CR00860CA"/>
<dbReference type="CGD" id="CAL0000181023">
    <property type="gene designation" value="TMA19"/>
</dbReference>
<dbReference type="VEuPathDB" id="FungiDB:CR_00860C_A"/>
<dbReference type="eggNOG" id="KOG1727">
    <property type="taxonomic scope" value="Eukaryota"/>
</dbReference>
<dbReference type="HOGENOM" id="CLU_095877_0_0_1"/>
<dbReference type="InParanoid" id="Q5A860"/>
<dbReference type="OMA" id="AYNKCIK"/>
<dbReference type="OrthoDB" id="10248936at2759"/>
<dbReference type="PRO" id="PR:Q5A860"/>
<dbReference type="Proteomes" id="UP000000559">
    <property type="component" value="Chromosome R"/>
</dbReference>
<dbReference type="GO" id="GO:0005737">
    <property type="term" value="C:cytoplasm"/>
    <property type="evidence" value="ECO:0000318"/>
    <property type="project" value="GO_Central"/>
</dbReference>
<dbReference type="GO" id="GO:0005829">
    <property type="term" value="C:cytosol"/>
    <property type="evidence" value="ECO:0007669"/>
    <property type="project" value="EnsemblFungi"/>
</dbReference>
<dbReference type="GO" id="GO:0062040">
    <property type="term" value="C:fungal biofilm matrix"/>
    <property type="evidence" value="ECO:0000314"/>
    <property type="project" value="CGD"/>
</dbReference>
<dbReference type="GO" id="GO:0005874">
    <property type="term" value="C:microtubule"/>
    <property type="evidence" value="ECO:0007669"/>
    <property type="project" value="UniProtKB-KW"/>
</dbReference>
<dbReference type="GO" id="GO:0005739">
    <property type="term" value="C:mitochondrion"/>
    <property type="evidence" value="ECO:0007669"/>
    <property type="project" value="EnsemblFungi"/>
</dbReference>
<dbReference type="GO" id="GO:0005509">
    <property type="term" value="F:calcium ion binding"/>
    <property type="evidence" value="ECO:0000318"/>
    <property type="project" value="GO_Central"/>
</dbReference>
<dbReference type="GO" id="GO:0002181">
    <property type="term" value="P:cytoplasmic translation"/>
    <property type="evidence" value="ECO:0007669"/>
    <property type="project" value="EnsemblFungi"/>
</dbReference>
<dbReference type="GO" id="GO:0010507">
    <property type="term" value="P:negative regulation of autophagy"/>
    <property type="evidence" value="ECO:0007669"/>
    <property type="project" value="EnsemblFungi"/>
</dbReference>
<dbReference type="GO" id="GO:0007026">
    <property type="term" value="P:negative regulation of microtubule depolymerization"/>
    <property type="evidence" value="ECO:0007669"/>
    <property type="project" value="EnsemblFungi"/>
</dbReference>
<dbReference type="FunFam" id="2.170.150.10:FF:000002">
    <property type="entry name" value="Translationally-controlled tumor protein homolog"/>
    <property type="match status" value="1"/>
</dbReference>
<dbReference type="Gene3D" id="2.170.150.10">
    <property type="entry name" value="Metal Binding Protein, Guanine Nucleotide Exchange Factor, Chain A"/>
    <property type="match status" value="1"/>
</dbReference>
<dbReference type="InterPro" id="IPR011057">
    <property type="entry name" value="Mss4-like_sf"/>
</dbReference>
<dbReference type="InterPro" id="IPR011323">
    <property type="entry name" value="Mss4/transl-control_tumour"/>
</dbReference>
<dbReference type="InterPro" id="IPR034737">
    <property type="entry name" value="TCTP"/>
</dbReference>
<dbReference type="InterPro" id="IPR018103">
    <property type="entry name" value="Translation_control_tumour_CS"/>
</dbReference>
<dbReference type="InterPro" id="IPR018105">
    <property type="entry name" value="Translational_control_tumour_p"/>
</dbReference>
<dbReference type="PANTHER" id="PTHR11991">
    <property type="entry name" value="TRANSLATIONALLY CONTROLLED TUMOR PROTEIN-RELATED"/>
    <property type="match status" value="1"/>
</dbReference>
<dbReference type="PANTHER" id="PTHR11991:SF0">
    <property type="entry name" value="TRANSLATIONALLY-CONTROLLED TUMOR PROTEIN"/>
    <property type="match status" value="1"/>
</dbReference>
<dbReference type="Pfam" id="PF00838">
    <property type="entry name" value="TCTP"/>
    <property type="match status" value="1"/>
</dbReference>
<dbReference type="PRINTS" id="PR01653">
    <property type="entry name" value="TCTPROTEIN"/>
</dbReference>
<dbReference type="SUPFAM" id="SSF51316">
    <property type="entry name" value="Mss4-like"/>
    <property type="match status" value="1"/>
</dbReference>
<dbReference type="PROSITE" id="PS01002">
    <property type="entry name" value="TCTP_1"/>
    <property type="match status" value="1"/>
</dbReference>
<dbReference type="PROSITE" id="PS01003">
    <property type="entry name" value="TCTP_2"/>
    <property type="match status" value="1"/>
</dbReference>
<dbReference type="PROSITE" id="PS51797">
    <property type="entry name" value="TCTP_3"/>
    <property type="match status" value="1"/>
</dbReference>
<organism>
    <name type="scientific">Candida albicans (strain SC5314 / ATCC MYA-2876)</name>
    <name type="common">Yeast</name>
    <dbReference type="NCBI Taxonomy" id="237561"/>
    <lineage>
        <taxon>Eukaryota</taxon>
        <taxon>Fungi</taxon>
        <taxon>Dikarya</taxon>
        <taxon>Ascomycota</taxon>
        <taxon>Saccharomycotina</taxon>
        <taxon>Pichiomycetes</taxon>
        <taxon>Debaryomycetaceae</taxon>
        <taxon>Candida/Lodderomyces clade</taxon>
        <taxon>Candida</taxon>
    </lineage>
</organism>
<accession>Q5A860</accession>
<accession>A0A1D8PRU9</accession>
<reference key="1">
    <citation type="journal article" date="2004" name="Proc. Natl. Acad. Sci. U.S.A.">
        <title>The diploid genome sequence of Candida albicans.</title>
        <authorList>
            <person name="Jones T."/>
            <person name="Federspiel N.A."/>
            <person name="Chibana H."/>
            <person name="Dungan J."/>
            <person name="Kalman S."/>
            <person name="Magee B.B."/>
            <person name="Newport G."/>
            <person name="Thorstenson Y.R."/>
            <person name="Agabian N."/>
            <person name="Magee P.T."/>
            <person name="Davis R.W."/>
            <person name="Scherer S."/>
        </authorList>
    </citation>
    <scope>NUCLEOTIDE SEQUENCE [LARGE SCALE GENOMIC DNA]</scope>
    <source>
        <strain>SC5314 / ATCC MYA-2876</strain>
    </source>
</reference>
<reference key="2">
    <citation type="journal article" date="2007" name="Genome Biol.">
        <title>Assembly of the Candida albicans genome into sixteen supercontigs aligned on the eight chromosomes.</title>
        <authorList>
            <person name="van het Hoog M."/>
            <person name="Rast T.J."/>
            <person name="Martchenko M."/>
            <person name="Grindle S."/>
            <person name="Dignard D."/>
            <person name="Hogues H."/>
            <person name="Cuomo C."/>
            <person name="Berriman M."/>
            <person name="Scherer S."/>
            <person name="Magee B.B."/>
            <person name="Whiteway M."/>
            <person name="Chibana H."/>
            <person name="Nantel A."/>
            <person name="Magee P.T."/>
        </authorList>
    </citation>
    <scope>GENOME REANNOTATION</scope>
    <source>
        <strain>SC5314 / ATCC MYA-2876</strain>
    </source>
</reference>
<reference key="3">
    <citation type="journal article" date="2013" name="Genome Biol.">
        <title>Assembly of a phased diploid Candida albicans genome facilitates allele-specific measurements and provides a simple model for repeat and indel structure.</title>
        <authorList>
            <person name="Muzzey D."/>
            <person name="Schwartz K."/>
            <person name="Weissman J.S."/>
            <person name="Sherlock G."/>
        </authorList>
    </citation>
    <scope>NUCLEOTIDE SEQUENCE [LARGE SCALE GENOMIC DNA]</scope>
    <scope>GENOME REANNOTATION</scope>
    <source>
        <strain>SC5314 / ATCC MYA-2876</strain>
    </source>
</reference>
<gene>
    <name type="primary">TMA19</name>
    <name type="ordered locus">CAALFM_CR00860CA</name>
    <name type="ORF">CaO19.10778</name>
    <name type="ORF">CaO19.3268</name>
</gene>
<comment type="function">
    <text evidence="1">Involved in protein synthesis. Involved in microtubule stabilization (By similarity).</text>
</comment>
<comment type="subcellular location">
    <subcellularLocation>
        <location evidence="1">Cytoplasm</location>
        <location evidence="1">Cytoskeleton</location>
    </subcellularLocation>
</comment>
<comment type="similarity">
    <text evidence="2">Belongs to the TCTP family.</text>
</comment>
<proteinExistence type="inferred from homology"/>
<evidence type="ECO:0000250" key="1"/>
<evidence type="ECO:0000255" key="2">
    <source>
        <dbReference type="PROSITE-ProRule" id="PRU01133"/>
    </source>
</evidence>